<proteinExistence type="evidence at protein level"/>
<reference key="1">
    <citation type="journal article" date="2002" name="Nature">
        <title>The genome sequence of Schizosaccharomyces pombe.</title>
        <authorList>
            <person name="Wood V."/>
            <person name="Gwilliam R."/>
            <person name="Rajandream M.A."/>
            <person name="Lyne M.H."/>
            <person name="Lyne R."/>
            <person name="Stewart A."/>
            <person name="Sgouros J.G."/>
            <person name="Peat N."/>
            <person name="Hayles J."/>
            <person name="Baker S.G."/>
            <person name="Basham D."/>
            <person name="Bowman S."/>
            <person name="Brooks K."/>
            <person name="Brown D."/>
            <person name="Brown S."/>
            <person name="Chillingworth T."/>
            <person name="Churcher C.M."/>
            <person name="Collins M."/>
            <person name="Connor R."/>
            <person name="Cronin A."/>
            <person name="Davis P."/>
            <person name="Feltwell T."/>
            <person name="Fraser A."/>
            <person name="Gentles S."/>
            <person name="Goble A."/>
            <person name="Hamlin N."/>
            <person name="Harris D.E."/>
            <person name="Hidalgo J."/>
            <person name="Hodgson G."/>
            <person name="Holroyd S."/>
            <person name="Hornsby T."/>
            <person name="Howarth S."/>
            <person name="Huckle E.J."/>
            <person name="Hunt S."/>
            <person name="Jagels K."/>
            <person name="James K.D."/>
            <person name="Jones L."/>
            <person name="Jones M."/>
            <person name="Leather S."/>
            <person name="McDonald S."/>
            <person name="McLean J."/>
            <person name="Mooney P."/>
            <person name="Moule S."/>
            <person name="Mungall K.L."/>
            <person name="Murphy L.D."/>
            <person name="Niblett D."/>
            <person name="Odell C."/>
            <person name="Oliver K."/>
            <person name="O'Neil S."/>
            <person name="Pearson D."/>
            <person name="Quail M.A."/>
            <person name="Rabbinowitsch E."/>
            <person name="Rutherford K.M."/>
            <person name="Rutter S."/>
            <person name="Saunders D."/>
            <person name="Seeger K."/>
            <person name="Sharp S."/>
            <person name="Skelton J."/>
            <person name="Simmonds M.N."/>
            <person name="Squares R."/>
            <person name="Squares S."/>
            <person name="Stevens K."/>
            <person name="Taylor K."/>
            <person name="Taylor R.G."/>
            <person name="Tivey A."/>
            <person name="Walsh S.V."/>
            <person name="Warren T."/>
            <person name="Whitehead S."/>
            <person name="Woodward J.R."/>
            <person name="Volckaert G."/>
            <person name="Aert R."/>
            <person name="Robben J."/>
            <person name="Grymonprez B."/>
            <person name="Weltjens I."/>
            <person name="Vanstreels E."/>
            <person name="Rieger M."/>
            <person name="Schaefer M."/>
            <person name="Mueller-Auer S."/>
            <person name="Gabel C."/>
            <person name="Fuchs M."/>
            <person name="Duesterhoeft A."/>
            <person name="Fritzc C."/>
            <person name="Holzer E."/>
            <person name="Moestl D."/>
            <person name="Hilbert H."/>
            <person name="Borzym K."/>
            <person name="Langer I."/>
            <person name="Beck A."/>
            <person name="Lehrach H."/>
            <person name="Reinhardt R."/>
            <person name="Pohl T.M."/>
            <person name="Eger P."/>
            <person name="Zimmermann W."/>
            <person name="Wedler H."/>
            <person name="Wambutt R."/>
            <person name="Purnelle B."/>
            <person name="Goffeau A."/>
            <person name="Cadieu E."/>
            <person name="Dreano S."/>
            <person name="Gloux S."/>
            <person name="Lelaure V."/>
            <person name="Mottier S."/>
            <person name="Galibert F."/>
            <person name="Aves S.J."/>
            <person name="Xiang Z."/>
            <person name="Hunt C."/>
            <person name="Moore K."/>
            <person name="Hurst S.M."/>
            <person name="Lucas M."/>
            <person name="Rochet M."/>
            <person name="Gaillardin C."/>
            <person name="Tallada V.A."/>
            <person name="Garzon A."/>
            <person name="Thode G."/>
            <person name="Daga R.R."/>
            <person name="Cruzado L."/>
            <person name="Jimenez J."/>
            <person name="Sanchez M."/>
            <person name="del Rey F."/>
            <person name="Benito J."/>
            <person name="Dominguez A."/>
            <person name="Revuelta J.L."/>
            <person name="Moreno S."/>
            <person name="Armstrong J."/>
            <person name="Forsburg S.L."/>
            <person name="Cerutti L."/>
            <person name="Lowe T."/>
            <person name="McCombie W.R."/>
            <person name="Paulsen I."/>
            <person name="Potashkin J."/>
            <person name="Shpakovski G.V."/>
            <person name="Ussery D."/>
            <person name="Barrell B.G."/>
            <person name="Nurse P."/>
        </authorList>
    </citation>
    <scope>NUCLEOTIDE SEQUENCE [LARGE SCALE GENOMIC DNA]</scope>
    <source>
        <strain>972 / ATCC 24843</strain>
    </source>
</reference>
<reference key="2">
    <citation type="journal article" date="2006" name="Nat. Biotechnol.">
        <title>ORFeome cloning and global analysis of protein localization in the fission yeast Schizosaccharomyces pombe.</title>
        <authorList>
            <person name="Matsuyama A."/>
            <person name="Arai R."/>
            <person name="Yashiroda Y."/>
            <person name="Shirai A."/>
            <person name="Kamata A."/>
            <person name="Sekido S."/>
            <person name="Kobayashi Y."/>
            <person name="Hashimoto A."/>
            <person name="Hamamoto M."/>
            <person name="Hiraoka Y."/>
            <person name="Horinouchi S."/>
            <person name="Yoshida M."/>
        </authorList>
    </citation>
    <scope>SUBCELLULAR LOCATION [LARGE SCALE ANALYSIS]</scope>
</reference>
<reference evidence="6" key="3">
    <citation type="journal article" date="2023" name="Proc. Natl. Acad. Sci. U.S.A.">
        <title>Structure and function of the S. pombe III-IV-cyt c supercomplex.</title>
        <authorList>
            <person name="Moe A."/>
            <person name="Dimogkioka A.R."/>
            <person name="Rapaport D."/>
            <person name="Ojemyr L.N."/>
            <person name="Brzezinski P."/>
        </authorList>
    </citation>
    <scope>STRUCTURE BY ELECTRON MICROSCOPY (3.40 ANGSTROMS)</scope>
</reference>
<protein>
    <recommendedName>
        <fullName>Cytochrome b-c1 complex subunit 9</fullName>
    </recommendedName>
    <alternativeName>
        <fullName>Complex III subunit 9</fullName>
    </alternativeName>
    <alternativeName>
        <fullName>Cytochrome c1 non-heme 7.3 kDa protein</fullName>
    </alternativeName>
    <alternativeName>
        <fullName>Ubiquinol-cytochrome c reductase complex 7.3 kDa protein</fullName>
    </alternativeName>
</protein>
<dbReference type="EMBL" id="CU329672">
    <property type="protein sequence ID" value="CAK9841327.1"/>
    <property type="molecule type" value="Genomic_DNA"/>
</dbReference>
<dbReference type="PIR" id="T41058">
    <property type="entry name" value="T41058"/>
</dbReference>
<dbReference type="RefSeq" id="NP_587794.3">
    <property type="nucleotide sequence ID" value="NM_001022787.3"/>
</dbReference>
<dbReference type="PDB" id="8Q1B">
    <property type="method" value="EM"/>
    <property type="resolution" value="3.40 A"/>
    <property type="chains" value="I/T=1-67"/>
</dbReference>
<dbReference type="PDBsum" id="8Q1B"/>
<dbReference type="EMDB" id="EMD-18062"/>
<dbReference type="SMR" id="O74433"/>
<dbReference type="ComplexPortal" id="CPX-9308">
    <property type="entry name" value="Mitochondrial respiratory chain complex III"/>
</dbReference>
<dbReference type="FunCoup" id="O74433">
    <property type="interactions" value="114"/>
</dbReference>
<dbReference type="STRING" id="284812.O74433"/>
<dbReference type="PaxDb" id="4896-SPCC1682.01.1"/>
<dbReference type="GeneID" id="2539153"/>
<dbReference type="KEGG" id="spo:2539153"/>
<dbReference type="PomBase" id="SPCC1682.01">
    <property type="gene designation" value="qcr9"/>
</dbReference>
<dbReference type="eggNOG" id="KOG3494">
    <property type="taxonomic scope" value="Eukaryota"/>
</dbReference>
<dbReference type="InParanoid" id="O74433"/>
<dbReference type="PhylomeDB" id="O74433"/>
<dbReference type="Reactome" id="R-SPO-611105">
    <property type="pathway name" value="Respiratory electron transport"/>
</dbReference>
<dbReference type="PRO" id="PR:O74433"/>
<dbReference type="Proteomes" id="UP000002485">
    <property type="component" value="Chromosome III"/>
</dbReference>
<dbReference type="GO" id="GO:0005743">
    <property type="term" value="C:mitochondrial inner membrane"/>
    <property type="evidence" value="ECO:0007669"/>
    <property type="project" value="UniProtKB-KW"/>
</dbReference>
<dbReference type="GO" id="GO:0005739">
    <property type="term" value="C:mitochondrion"/>
    <property type="evidence" value="ECO:0007005"/>
    <property type="project" value="PomBase"/>
</dbReference>
<dbReference type="GO" id="GO:0045275">
    <property type="term" value="C:respiratory chain complex III"/>
    <property type="evidence" value="ECO:0007669"/>
    <property type="project" value="UniProtKB-UniRule"/>
</dbReference>
<dbReference type="GO" id="GO:0006122">
    <property type="term" value="P:mitochondrial electron transport, ubiquinol to cytochrome c"/>
    <property type="evidence" value="ECO:0007669"/>
    <property type="project" value="UniProtKB-UniRule"/>
</dbReference>
<dbReference type="FunFam" id="1.20.5.260:FF:000001">
    <property type="entry name" value="Cytochrome b-c1 complex subunit 9"/>
    <property type="match status" value="1"/>
</dbReference>
<dbReference type="Gene3D" id="1.20.5.260">
    <property type="entry name" value="Cytochrome b-c1 complex subunit 9"/>
    <property type="match status" value="1"/>
</dbReference>
<dbReference type="InterPro" id="IPR008027">
    <property type="entry name" value="QCR9"/>
</dbReference>
<dbReference type="InterPro" id="IPR036656">
    <property type="entry name" value="QCR9_sf"/>
</dbReference>
<dbReference type="PANTHER" id="PTHR12980:SF0">
    <property type="entry name" value="CYTOCHROME B-C1 COMPLEX SUBUNIT 9"/>
    <property type="match status" value="1"/>
</dbReference>
<dbReference type="PANTHER" id="PTHR12980">
    <property type="entry name" value="UBIQUINOL-CYTOCHROME C REDUCTASE COMPLEX, SUBUNIT X"/>
    <property type="match status" value="1"/>
</dbReference>
<dbReference type="Pfam" id="PF05365">
    <property type="entry name" value="UCR_UQCRX_QCR9"/>
    <property type="match status" value="1"/>
</dbReference>
<dbReference type="SUPFAM" id="SSF81514">
    <property type="entry name" value="Subunit X (non-heme 7 kDa protein) of cytochrome bc1 complex (Ubiquinol-cytochrome c reductase)"/>
    <property type="match status" value="1"/>
</dbReference>
<organism>
    <name type="scientific">Schizosaccharomyces pombe (strain 972 / ATCC 24843)</name>
    <name type="common">Fission yeast</name>
    <dbReference type="NCBI Taxonomy" id="284812"/>
    <lineage>
        <taxon>Eukaryota</taxon>
        <taxon>Fungi</taxon>
        <taxon>Dikarya</taxon>
        <taxon>Ascomycota</taxon>
        <taxon>Taphrinomycotina</taxon>
        <taxon>Schizosaccharomycetes</taxon>
        <taxon>Schizosaccharomycetales</taxon>
        <taxon>Schizosaccharomycetaceae</taxon>
        <taxon>Schizosaccharomyces</taxon>
    </lineage>
</organism>
<keyword id="KW-0002">3D-structure</keyword>
<keyword id="KW-0249">Electron transport</keyword>
<keyword id="KW-0472">Membrane</keyword>
<keyword id="KW-0496">Mitochondrion</keyword>
<keyword id="KW-0999">Mitochondrion inner membrane</keyword>
<keyword id="KW-1185">Reference proteome</keyword>
<keyword id="KW-0679">Respiratory chain</keyword>
<keyword id="KW-0812">Transmembrane</keyword>
<keyword id="KW-1133">Transmembrane helix</keyword>
<keyword id="KW-0813">Transport</keyword>
<feature type="chain" id="PRO_0000193557" description="Cytochrome b-c1 complex subunit 9">
    <location>
        <begin position="1"/>
        <end position="67"/>
    </location>
</feature>
<feature type="topological domain" description="Mitochondrial matrix" evidence="2">
    <location>
        <begin position="1"/>
        <end position="17"/>
    </location>
</feature>
<feature type="transmembrane region" description="Helical" evidence="2">
    <location>
        <begin position="18"/>
        <end position="43"/>
    </location>
</feature>
<feature type="topological domain" description="Mitochondrial intermembrane" evidence="2">
    <location>
        <begin position="44"/>
        <end position="67"/>
    </location>
</feature>
<accession>O74433</accession>
<accession>A0AAN2HAK5</accession>
<gene>
    <name type="primary">qcr9</name>
    <name evidence="5" type="ORF">SPCC1682.01</name>
</gene>
<comment type="function">
    <text evidence="2 4">Component of the ubiquinol-cytochrome c oxidoreductase, a multisubunit transmembrane complex that is part of the mitochondrial electron transport chain which drives oxidative phosphorylation. The respiratory chain contains 3 multisubunit complexes succinate dehydrogenase (complex II, CII), ubiquinol-cytochrome c oxidoreductase (cytochrome b-c1 complex, complex III, CIII) and cytochrome c oxidase (complex IV, CIV), that cooperate to transfer electrons derived from NADH and succinate to molecular oxygen, creating an electrochemical gradient over the inner membrane that drives transmembrane transport and the ATP synthase. The cytochrome b-c1 complex catalyzes electron transfer from ubiquinol to cytochrome c, linking this redox reaction to translocation of protons across the mitochondrial inner membrane, with protons being carried across the membrane as hydrogens on the quinol. In the process called Q cycle, 2 protons are consumed from the matrix, 4 protons are released into the intermembrane space and 2 electrons are passed to cytochrome c (Probable). The III(2) supercomplex also displays mitochondrial processing peptidase (MPP) activity, containing alpha and beta MPP subunits qcr1 and qcr2, respectively, showing a dual role of III(2)IV in fission yeast (PubMed:37939086).</text>
</comment>
<comment type="subunit">
    <text evidence="2">Component of the ubiquinol-cytochrome c oxidoreductase (cytochrome b-c1 complex, complex III, CIII), a multisubunit enzyme composed of 3 respiratory subunits cytochrome b, cytochrome c1 and Rieske protein, 2 core protein subunits, and additional low-molecular weight protein subunits. The complex exists as an obligatory dimer and forms supercomplexes (SCs) in the inner mitochondrial membrane with cytochrome c oxidase (complex IV, CIV) (PubMed:37939086). In fission yeast, the III(2)IV supercomplex displays a dual role, in both respiratory electron transfer and enzymatic cleavage of mitochondrial signal sequences, with integration of the peptidase activity with the III(2) respiratory system and a two-dimensional cytochrome c diffusion mechanism within the III(2)IV supercomplex (PubMed:37939086).</text>
</comment>
<comment type="subcellular location">
    <subcellularLocation>
        <location evidence="1">Mitochondrion</location>
    </subcellularLocation>
    <subcellularLocation>
        <location evidence="2">Mitochondrion inner membrane</location>
        <topology evidence="2">Single-pass membrane protein</topology>
    </subcellularLocation>
</comment>
<comment type="similarity">
    <text evidence="3">Belongs to the UQCR10/QCR9 family.</text>
</comment>
<sequence length="67" mass="7800">MASSTIYNIFFRRNSSFYATIFVSAFFAKIGFDVFTDSVWKRANAGLTWDEVKPRFLNKDEDAEDDE</sequence>
<name>QCR9_SCHPO</name>
<evidence type="ECO:0000269" key="1">
    <source>
    </source>
</evidence>
<evidence type="ECO:0000269" key="2">
    <source>
    </source>
</evidence>
<evidence type="ECO:0000305" key="3"/>
<evidence type="ECO:0000305" key="4">
    <source>
    </source>
</evidence>
<evidence type="ECO:0000312" key="5">
    <source>
        <dbReference type="PomBase" id="SPCC1682.01"/>
    </source>
</evidence>
<evidence type="ECO:0007744" key="6">
    <source>
        <dbReference type="PDB" id="8Q1B"/>
    </source>
</evidence>